<proteinExistence type="inferred from homology"/>
<comment type="function">
    <text evidence="1">One of the components of the core complex of photosystem II (PSII). It binds chlorophyll and helps catalyze the primary light-induced photochemical processes of PSII. PSII is a light-driven water:plastoquinone oxidoreductase, using light energy to abstract electrons from H(2)O, generating O(2) and a proton gradient subsequently used for ATP formation.</text>
</comment>
<comment type="cofactor">
    <text evidence="1">Binds multiple chlorophylls. PSII binds additional chlorophylls, carotenoids and specific lipids.</text>
</comment>
<comment type="subunit">
    <text evidence="1">PSII is composed of 1 copy each of membrane proteins PsbA, PsbB, PsbC, PsbD, PsbE, PsbF, PsbH, PsbI, PsbJ, PsbK, PsbL, PsbM, PsbT, PsbX, PsbY, PsbZ, Psb30/Ycf12, at least 3 peripheral proteins of the oxygen-evolving complex and a large number of cofactors. It forms dimeric complexes.</text>
</comment>
<comment type="subcellular location">
    <subcellularLocation>
        <location evidence="1">Plastid</location>
        <location evidence="1">Chloroplast thylakoid membrane</location>
        <topology evidence="1">Multi-pass membrane protein</topology>
    </subcellularLocation>
</comment>
<comment type="similarity">
    <text evidence="1">Belongs to the PsbB/PsbC family. PsbB subfamily.</text>
</comment>
<feature type="chain" id="PRO_0000359860" description="Photosystem II CP47 reaction center protein">
    <location>
        <begin position="1"/>
        <end position="508"/>
    </location>
</feature>
<feature type="transmembrane region" description="Helical" evidence="1">
    <location>
        <begin position="21"/>
        <end position="36"/>
    </location>
</feature>
<feature type="transmembrane region" description="Helical" evidence="1">
    <location>
        <begin position="101"/>
        <end position="115"/>
    </location>
</feature>
<feature type="transmembrane region" description="Helical" evidence="1">
    <location>
        <begin position="140"/>
        <end position="156"/>
    </location>
</feature>
<feature type="transmembrane region" description="Helical" evidence="1">
    <location>
        <begin position="203"/>
        <end position="218"/>
    </location>
</feature>
<feature type="transmembrane region" description="Helical" evidence="1">
    <location>
        <begin position="237"/>
        <end position="252"/>
    </location>
</feature>
<feature type="transmembrane region" description="Helical" evidence="1">
    <location>
        <begin position="457"/>
        <end position="472"/>
    </location>
</feature>
<protein>
    <recommendedName>
        <fullName evidence="1">Photosystem II CP47 reaction center protein</fullName>
    </recommendedName>
    <alternativeName>
        <fullName evidence="1">PSII 47 kDa protein</fullName>
    </alternativeName>
    <alternativeName>
        <fullName evidence="1">Protein CP-47</fullName>
    </alternativeName>
</protein>
<reference key="1">
    <citation type="journal article" date="2004" name="Mol. Biol. Evol.">
        <title>Chloroplast phylogeny indicates that bryophytes are monophyletic.</title>
        <authorList>
            <person name="Nishiyama T."/>
            <person name="Wolf P.G."/>
            <person name="Kugita M."/>
            <person name="Sinclair R.B."/>
            <person name="Sugita M."/>
            <person name="Sugiura C."/>
            <person name="Wakasugi T."/>
            <person name="Yamada K."/>
            <person name="Yoshinaga K."/>
            <person name="Yamaguchi K."/>
            <person name="Ueda K."/>
            <person name="Hasebe M."/>
        </authorList>
    </citation>
    <scope>NUCLEOTIDE SEQUENCE [LARGE SCALE GENOMIC DNA]</scope>
    <source>
        <strain>Kingyoku</strain>
    </source>
</reference>
<keyword id="KW-0148">Chlorophyll</keyword>
<keyword id="KW-0150">Chloroplast</keyword>
<keyword id="KW-0157">Chromophore</keyword>
<keyword id="KW-0472">Membrane</keyword>
<keyword id="KW-0602">Photosynthesis</keyword>
<keyword id="KW-0604">Photosystem II</keyword>
<keyword id="KW-0934">Plastid</keyword>
<keyword id="KW-0793">Thylakoid</keyword>
<keyword id="KW-0812">Transmembrane</keyword>
<keyword id="KW-1133">Transmembrane helix</keyword>
<evidence type="ECO:0000255" key="1">
    <source>
        <dbReference type="HAMAP-Rule" id="MF_01495"/>
    </source>
</evidence>
<dbReference type="EMBL" id="AP004638">
    <property type="protein sequence ID" value="BAB84242.1"/>
    <property type="molecule type" value="Genomic_DNA"/>
</dbReference>
<dbReference type="RefSeq" id="NP_569654.1">
    <property type="nucleotide sequence ID" value="NC_003386.1"/>
</dbReference>
<dbReference type="SMR" id="Q8WHZ6"/>
<dbReference type="GeneID" id="2545151"/>
<dbReference type="GO" id="GO:0009535">
    <property type="term" value="C:chloroplast thylakoid membrane"/>
    <property type="evidence" value="ECO:0007669"/>
    <property type="project" value="UniProtKB-SubCell"/>
</dbReference>
<dbReference type="GO" id="GO:0009523">
    <property type="term" value="C:photosystem II"/>
    <property type="evidence" value="ECO:0007669"/>
    <property type="project" value="UniProtKB-KW"/>
</dbReference>
<dbReference type="GO" id="GO:0016168">
    <property type="term" value="F:chlorophyll binding"/>
    <property type="evidence" value="ECO:0007669"/>
    <property type="project" value="UniProtKB-UniRule"/>
</dbReference>
<dbReference type="GO" id="GO:0045156">
    <property type="term" value="F:electron transporter, transferring electrons within the cyclic electron transport pathway of photosynthesis activity"/>
    <property type="evidence" value="ECO:0007669"/>
    <property type="project" value="InterPro"/>
</dbReference>
<dbReference type="GO" id="GO:0009772">
    <property type="term" value="P:photosynthetic electron transport in photosystem II"/>
    <property type="evidence" value="ECO:0007669"/>
    <property type="project" value="InterPro"/>
</dbReference>
<dbReference type="FunFam" id="3.10.680.10:FF:000001">
    <property type="entry name" value="Photosystem II CP47 reaction center protein"/>
    <property type="match status" value="1"/>
</dbReference>
<dbReference type="Gene3D" id="3.10.680.10">
    <property type="entry name" value="Photosystem II CP47 reaction center protein"/>
    <property type="match status" value="1"/>
</dbReference>
<dbReference type="HAMAP" id="MF_01495">
    <property type="entry name" value="PSII_PsbB_CP47"/>
    <property type="match status" value="1"/>
</dbReference>
<dbReference type="InterPro" id="IPR000932">
    <property type="entry name" value="PS_antenna-like"/>
</dbReference>
<dbReference type="InterPro" id="IPR036001">
    <property type="entry name" value="PS_II_antenna-like_sf"/>
</dbReference>
<dbReference type="InterPro" id="IPR017486">
    <property type="entry name" value="PSII_PsbB"/>
</dbReference>
<dbReference type="NCBIfam" id="TIGR03039">
    <property type="entry name" value="PS_II_CP47"/>
    <property type="match status" value="1"/>
</dbReference>
<dbReference type="Pfam" id="PF00421">
    <property type="entry name" value="PSII"/>
    <property type="match status" value="1"/>
</dbReference>
<dbReference type="SUPFAM" id="SSF161077">
    <property type="entry name" value="Photosystem II antenna protein-like"/>
    <property type="match status" value="1"/>
</dbReference>
<name>PSBB_PSINU</name>
<organism>
    <name type="scientific">Psilotum nudum</name>
    <name type="common">Whisk fern</name>
    <name type="synonym">Lycopodium nudum</name>
    <dbReference type="NCBI Taxonomy" id="3240"/>
    <lineage>
        <taxon>Eukaryota</taxon>
        <taxon>Viridiplantae</taxon>
        <taxon>Streptophyta</taxon>
        <taxon>Embryophyta</taxon>
        <taxon>Tracheophyta</taxon>
        <taxon>Polypodiopsida</taxon>
        <taxon>Ophioglossidae</taxon>
        <taxon>Psilotales</taxon>
        <taxon>Psilotaceae</taxon>
        <taxon>Psilotum</taxon>
    </lineage>
</organism>
<geneLocation type="chloroplast"/>
<sequence>MGLPWYRVHTVVLNDPGRLIAVHLMHTALVSGWAGSMALYELAVFDPSDPVLDPMWRQGMFVIPFMTRIGITKSWGGWSITGDTVSDAGIWSFEGVAAAHITLSGLLFLSAIWHWVYWDLDLFRDERTGKPSLDLPKIFGIHLFLSGVLCFGFGAFHITGLFGPGIWISDPYGLTGKVQPVDPAWGAEGFDPFIPGGIASHHIAAGILGILAGLFHLSVRPPQRLYKALRMGNVETVLSSSIAAVFFAAFVVSGTMWYGSATTPIELFGPTRYQWDQGYFQQEIDRRIRASRAEGLSLSEAWSRIPEKLAFYDYIGNNPAKGGLFRAGAMDNGDGIAIGWLGHAAFKDKEGHELFVRRMPTFFETFPVVLVDEEGIVRADAPFRRAESKYSVEQVGVTVEFYGGELNGVGFNDPSTVKKYARRAQLGEIFEFDRATLKSDGVFRSSPRGWFTFGHATFALIFFFGHIWHGARTLFRDVFAGIDPDLDAQVEFGAFQKLGDPTTERQGI</sequence>
<gene>
    <name evidence="1" type="primary">psbB</name>
</gene>
<accession>Q8WHZ6</accession>